<gene>
    <name type="primary">cry24Aa</name>
    <name type="synonym">cryXXIVA(a)</name>
</gene>
<comment type="function">
    <text>Promotes colloidosmotic lysis by binding to the midgut epithelial cells of insects.</text>
</comment>
<comment type="developmental stage">
    <text>The crystal protein is produced during sporulation and is accumulated both as an inclusion and as part of the spore coat.</text>
</comment>
<comment type="miscellaneous">
    <text>Toxic segment of the protein is located in the N-terminus.</text>
</comment>
<comment type="similarity">
    <text evidence="1">Belongs to the delta endotoxin family.</text>
</comment>
<dbReference type="EMBL" id="U88188">
    <property type="protein sequence ID" value="AAC61891.1"/>
    <property type="molecule type" value="Genomic_DNA"/>
</dbReference>
<dbReference type="SMR" id="O87905"/>
<dbReference type="GO" id="GO:0005102">
    <property type="term" value="F:signaling receptor binding"/>
    <property type="evidence" value="ECO:0007669"/>
    <property type="project" value="InterPro"/>
</dbReference>
<dbReference type="GO" id="GO:0090729">
    <property type="term" value="F:toxin activity"/>
    <property type="evidence" value="ECO:0007669"/>
    <property type="project" value="UniProtKB-KW"/>
</dbReference>
<dbReference type="GO" id="GO:0030435">
    <property type="term" value="P:sporulation resulting in formation of a cellular spore"/>
    <property type="evidence" value="ECO:0007669"/>
    <property type="project" value="UniProtKB-KW"/>
</dbReference>
<dbReference type="GO" id="GO:0001907">
    <property type="term" value="P:symbiont-mediated killing of host cell"/>
    <property type="evidence" value="ECO:0007669"/>
    <property type="project" value="InterPro"/>
</dbReference>
<dbReference type="CDD" id="cd04085">
    <property type="entry name" value="delta_endotoxin_C"/>
    <property type="match status" value="1"/>
</dbReference>
<dbReference type="Gene3D" id="2.60.120.260">
    <property type="entry name" value="Galactose-binding domain-like"/>
    <property type="match status" value="1"/>
</dbReference>
<dbReference type="Gene3D" id="2.100.10.10">
    <property type="entry name" value="Pesticidal crystal protein, central domain"/>
    <property type="match status" value="1"/>
</dbReference>
<dbReference type="Gene3D" id="1.20.190.10">
    <property type="entry name" value="Pesticidal crystal protein, N-terminal domain"/>
    <property type="match status" value="1"/>
</dbReference>
<dbReference type="InterPro" id="IPR008979">
    <property type="entry name" value="Galactose-bd-like_sf"/>
</dbReference>
<dbReference type="InterPro" id="IPR038979">
    <property type="entry name" value="Pest_crys"/>
</dbReference>
<dbReference type="InterPro" id="IPR005638">
    <property type="entry name" value="Pest_crys_dom-III"/>
</dbReference>
<dbReference type="InterPro" id="IPR005639">
    <property type="entry name" value="Pest_crys_dom_I"/>
</dbReference>
<dbReference type="InterPro" id="IPR036716">
    <property type="entry name" value="Pest_crys_N_sf"/>
</dbReference>
<dbReference type="InterPro" id="IPR036399">
    <property type="entry name" value="Pest_cryst_cen_dom_sf"/>
</dbReference>
<dbReference type="InterPro" id="IPR001178">
    <property type="entry name" value="Pest_cryst_dom_II"/>
</dbReference>
<dbReference type="PANTHER" id="PTHR37003">
    <property type="entry name" value="ENDOTOXIN_N DOMAIN-CONTAINING PROTEIN-RELATED"/>
    <property type="match status" value="1"/>
</dbReference>
<dbReference type="PANTHER" id="PTHR37003:SF2">
    <property type="entry name" value="PESTICIDAL CRYSTAL PROTEIN N-TERMINAL DOMAIN-CONTAINING PROTEIN"/>
    <property type="match status" value="1"/>
</dbReference>
<dbReference type="Pfam" id="PF03944">
    <property type="entry name" value="Endotoxin_C"/>
    <property type="match status" value="1"/>
</dbReference>
<dbReference type="Pfam" id="PF00555">
    <property type="entry name" value="Endotoxin_M"/>
    <property type="match status" value="1"/>
</dbReference>
<dbReference type="Pfam" id="PF03945">
    <property type="entry name" value="Endotoxin_N"/>
    <property type="match status" value="1"/>
</dbReference>
<dbReference type="SUPFAM" id="SSF51096">
    <property type="entry name" value="delta-Endotoxin (insectocide), middle domain"/>
    <property type="match status" value="1"/>
</dbReference>
<dbReference type="SUPFAM" id="SSF56849">
    <property type="entry name" value="delta-Endotoxin (insectocide), N-terminal domain"/>
    <property type="match status" value="1"/>
</dbReference>
<dbReference type="SUPFAM" id="SSF49785">
    <property type="entry name" value="Galactose-binding domain-like"/>
    <property type="match status" value="1"/>
</dbReference>
<protein>
    <recommendedName>
        <fullName>Pesticidal crystal protein Cry24Aa</fullName>
    </recommendedName>
    <alternativeName>
        <fullName>Crystaline entomocidal protoxin</fullName>
        <shortName>Crystal protein</shortName>
    </alternativeName>
    <alternativeName>
        <fullName>Insecticidal delta-endotoxin CryXXIVA(a)</fullName>
    </alternativeName>
    <alternativeName>
        <fullName>Insecticidal protein Jeg72</fullName>
    </alternativeName>
</protein>
<name>C24AA_BACTJ</name>
<accession>O87905</accession>
<feature type="chain" id="PRO_0000174099" description="Pesticidal crystal protein Cry24Aa">
    <location>
        <begin position="1"/>
        <end position="674" status="greater than"/>
    </location>
</feature>
<feature type="non-terminal residue">
    <location>
        <position position="674"/>
    </location>
</feature>
<evidence type="ECO:0000305" key="1"/>
<organism>
    <name type="scientific">Bacillus thuringiensis subsp. jegathesan</name>
    <dbReference type="NCBI Taxonomy" id="56955"/>
    <lineage>
        <taxon>Bacteria</taxon>
        <taxon>Bacillati</taxon>
        <taxon>Bacillota</taxon>
        <taxon>Bacilli</taxon>
        <taxon>Bacillales</taxon>
        <taxon>Bacillaceae</taxon>
        <taxon>Bacillus</taxon>
        <taxon>Bacillus cereus group</taxon>
    </lineage>
</organism>
<sequence length="674" mass="75959">MNQYQNKNEYEILESSQNNMNMPNRYPFADDPNAVMKNGNYKDWVNECEGSNISPSPAAAITSKIVSIVLKTLAKAVASSLADSIKSSLGISKTITENNVSQVSMVQVHQIINRRIQETILDLGESSLNGLVAIYNRDYLGALEAWNNNKSNINYQTNVAEAFKTVEREFFTKLKGIYRTSSSQITLLPTFTQAANLHLSMLRDAVMYQEGWNLQSHINYSKELDDALEDYTNYCVEVYTKGLNALRGSTAIDWLEFNSFRRDMTLMVLDLVAIFPNYNPVRYPLSTKISLSRKIYTDPVGRTDSPSFGDWTNTGRTLANFNDLEREVTDSPSLVKWLGDMTIYTGAIDSYRPTSPGDRIGVWYGNINAFYHTGRTDVVMFRQTGDTAYEDPSTFISNILYDDIYKLDLRAAAVSTIQGAMDTTFGVSSSRFFDIRGRNQLYQSNKPYPSLPITITFPGEESSEGNANDYSHLLCDVKILQEDSSNICEGRSSLLSHAWTHASLDRNNTILPDEITQIPAVTAYELRGNSSVVAGPGSTGGDLVKMSYHSVWSFKVYCSELKNYRVRIRYASHGNCQFLMKRWPSTGVAPRQWARHNVQGTFSNSMRYEAFKYLDIFTITPEENNFAFTIDLESGGDLFIDKIEFIPVSGSAFEYEGKQNIEKTQKAVNDLFIN</sequence>
<proteinExistence type="evidence at transcript level"/>
<keyword id="KW-0749">Sporulation</keyword>
<keyword id="KW-0800">Toxin</keyword>
<keyword id="KW-0843">Virulence</keyword>
<reference key="1">
    <citation type="submission" date="1997-01" db="EMBL/GenBank/DDBJ databases">
        <title>Isolation and characterization of insecticidal genes from Bacillus thuringiensis subsp. jegathesan.</title>
        <authorList>
            <person name="Kawalek M.D."/>
            <person name="Gill S.S."/>
        </authorList>
    </citation>
    <scope>NUCLEOTIDE SEQUENCE [GENOMIC DNA]</scope>
</reference>